<accession>A8AB26</accession>
<organism>
    <name type="scientific">Ignicoccus hospitalis (strain KIN4/I / DSM 18386 / JCM 14125)</name>
    <dbReference type="NCBI Taxonomy" id="453591"/>
    <lineage>
        <taxon>Archaea</taxon>
        <taxon>Thermoproteota</taxon>
        <taxon>Thermoprotei</taxon>
        <taxon>Desulfurococcales</taxon>
        <taxon>Desulfurococcaceae</taxon>
        <taxon>Ignicoccus</taxon>
    </lineage>
</organism>
<comment type="catalytic activity">
    <reaction evidence="1">
        <text>beta-nicotinamide D-ribonucleotide + ATP + H(+) = diphosphate + NAD(+)</text>
        <dbReference type="Rhea" id="RHEA:21360"/>
        <dbReference type="ChEBI" id="CHEBI:14649"/>
        <dbReference type="ChEBI" id="CHEBI:15378"/>
        <dbReference type="ChEBI" id="CHEBI:30616"/>
        <dbReference type="ChEBI" id="CHEBI:33019"/>
        <dbReference type="ChEBI" id="CHEBI:57540"/>
        <dbReference type="EC" id="2.7.7.1"/>
    </reaction>
</comment>
<comment type="pathway">
    <text evidence="1">Cofactor biosynthesis; NAD(+) biosynthesis; NAD(+) from nicotinamide D-ribonucleotide: step 1/1.</text>
</comment>
<comment type="subcellular location">
    <subcellularLocation>
        <location evidence="1">Cytoplasm</location>
    </subcellularLocation>
</comment>
<comment type="similarity">
    <text evidence="1">Belongs to the archaeal NMN adenylyltransferase family.</text>
</comment>
<reference key="1">
    <citation type="journal article" date="2008" name="Genome Biol.">
        <title>A genomic analysis of the archaeal system Ignicoccus hospitalis-Nanoarchaeum equitans.</title>
        <authorList>
            <person name="Podar M."/>
            <person name="Anderson I."/>
            <person name="Makarova K.S."/>
            <person name="Elkins J.G."/>
            <person name="Ivanova N."/>
            <person name="Wall M.A."/>
            <person name="Lykidis A."/>
            <person name="Mavromatis K."/>
            <person name="Sun H."/>
            <person name="Hudson M.E."/>
            <person name="Chen W."/>
            <person name="Deciu C."/>
            <person name="Hutchison D."/>
            <person name="Eads J.R."/>
            <person name="Anderson A."/>
            <person name="Fernandes F."/>
            <person name="Szeto E."/>
            <person name="Lapidus A."/>
            <person name="Kyrpides N.C."/>
            <person name="Saier M.H. Jr."/>
            <person name="Richardson P.M."/>
            <person name="Rachel R."/>
            <person name="Huber H."/>
            <person name="Eisen J.A."/>
            <person name="Koonin E.V."/>
            <person name="Keller M."/>
            <person name="Stetter K.O."/>
        </authorList>
    </citation>
    <scope>NUCLEOTIDE SEQUENCE [LARGE SCALE GENOMIC DNA]</scope>
    <source>
        <strain>KIN4/I / DSM 18386 / JCM 14125</strain>
    </source>
</reference>
<feature type="chain" id="PRO_1000005732" description="Nicotinamide-nucleotide adenylyltransferase">
    <location>
        <begin position="1"/>
        <end position="171"/>
    </location>
</feature>
<gene>
    <name type="ordered locus">Igni_0948</name>
</gene>
<protein>
    <recommendedName>
        <fullName evidence="1">Nicotinamide-nucleotide adenylyltransferase</fullName>
        <ecNumber evidence="1">2.7.7.1</ecNumber>
    </recommendedName>
    <alternativeName>
        <fullName evidence="1">NAD(+) diphosphorylase</fullName>
    </alternativeName>
    <alternativeName>
        <fullName evidence="1">NAD(+) pyrophosphorylase</fullName>
    </alternativeName>
    <alternativeName>
        <fullName evidence="1">NMN adenylyltransferase</fullName>
    </alternativeName>
</protein>
<keyword id="KW-0067">ATP-binding</keyword>
<keyword id="KW-0963">Cytoplasm</keyword>
<keyword id="KW-0520">NAD</keyword>
<keyword id="KW-0547">Nucleotide-binding</keyword>
<keyword id="KW-0548">Nucleotidyltransferase</keyword>
<keyword id="KW-0662">Pyridine nucleotide biosynthesis</keyword>
<keyword id="KW-1185">Reference proteome</keyword>
<keyword id="KW-0808">Transferase</keyword>
<proteinExistence type="inferred from homology"/>
<name>NADM_IGNH4</name>
<sequence length="171" mass="19520">MRALFPGRFQPFHKGHLAVVKWSLERVDELVIVVGSAQESHTLQNPMTAGERVLAIRRALEDEGIDLRKVYIIPVPDILMNSAWVAHVRTYVPPFEAVVTRNPLVKVLFEEAGYEVLEPPPFGREKYVATNIRALMALGDPKWEEMVPRAVAEIIKELGIIRRMRELSKRD</sequence>
<evidence type="ECO:0000255" key="1">
    <source>
        <dbReference type="HAMAP-Rule" id="MF_00243"/>
    </source>
</evidence>
<dbReference type="EC" id="2.7.7.1" evidence="1"/>
<dbReference type="EMBL" id="CP000816">
    <property type="protein sequence ID" value="ABU82128.1"/>
    <property type="molecule type" value="Genomic_DNA"/>
</dbReference>
<dbReference type="RefSeq" id="WP_012123092.1">
    <property type="nucleotide sequence ID" value="NC_009776.1"/>
</dbReference>
<dbReference type="SMR" id="A8AB26"/>
<dbReference type="STRING" id="453591.Igni_0948"/>
<dbReference type="GeneID" id="5562306"/>
<dbReference type="KEGG" id="iho:Igni_0948"/>
<dbReference type="eggNOG" id="arCOG00972">
    <property type="taxonomic scope" value="Archaea"/>
</dbReference>
<dbReference type="HOGENOM" id="CLU_108783_0_0_2"/>
<dbReference type="OrthoDB" id="264480at2157"/>
<dbReference type="PhylomeDB" id="A8AB26"/>
<dbReference type="UniPathway" id="UPA00253">
    <property type="reaction ID" value="UER00600"/>
</dbReference>
<dbReference type="Proteomes" id="UP000000262">
    <property type="component" value="Chromosome"/>
</dbReference>
<dbReference type="GO" id="GO:0005737">
    <property type="term" value="C:cytoplasm"/>
    <property type="evidence" value="ECO:0007669"/>
    <property type="project" value="UniProtKB-SubCell"/>
</dbReference>
<dbReference type="GO" id="GO:0005524">
    <property type="term" value="F:ATP binding"/>
    <property type="evidence" value="ECO:0007669"/>
    <property type="project" value="UniProtKB-KW"/>
</dbReference>
<dbReference type="GO" id="GO:0000309">
    <property type="term" value="F:nicotinamide-nucleotide adenylyltransferase activity"/>
    <property type="evidence" value="ECO:0007669"/>
    <property type="project" value="UniProtKB-UniRule"/>
</dbReference>
<dbReference type="GO" id="GO:0009435">
    <property type="term" value="P:NAD biosynthetic process"/>
    <property type="evidence" value="ECO:0007669"/>
    <property type="project" value="UniProtKB-UniRule"/>
</dbReference>
<dbReference type="CDD" id="cd02166">
    <property type="entry name" value="NMNAT_Archaea"/>
    <property type="match status" value="1"/>
</dbReference>
<dbReference type="Gene3D" id="3.40.50.620">
    <property type="entry name" value="HUPs"/>
    <property type="match status" value="1"/>
</dbReference>
<dbReference type="HAMAP" id="MF_00243">
    <property type="entry name" value="NMN_adenylyltr"/>
    <property type="match status" value="1"/>
</dbReference>
<dbReference type="InterPro" id="IPR004821">
    <property type="entry name" value="Cyt_trans-like"/>
</dbReference>
<dbReference type="InterPro" id="IPR006418">
    <property type="entry name" value="NMN_Atrans_arc"/>
</dbReference>
<dbReference type="InterPro" id="IPR014729">
    <property type="entry name" value="Rossmann-like_a/b/a_fold"/>
</dbReference>
<dbReference type="NCBIfam" id="TIGR01527">
    <property type="entry name" value="arch_NMN_Atrans"/>
    <property type="match status" value="1"/>
</dbReference>
<dbReference type="NCBIfam" id="TIGR00125">
    <property type="entry name" value="cyt_tran_rel"/>
    <property type="match status" value="1"/>
</dbReference>
<dbReference type="NCBIfam" id="NF002243">
    <property type="entry name" value="PRK01153.1"/>
    <property type="match status" value="1"/>
</dbReference>
<dbReference type="PANTHER" id="PTHR21342:SF0">
    <property type="entry name" value="BIFUNCTIONAL NMN ADENYLYLTRANSFERASE_NUDIX HYDROLASE"/>
    <property type="match status" value="1"/>
</dbReference>
<dbReference type="PANTHER" id="PTHR21342">
    <property type="entry name" value="PHOSPHOPANTETHEINE ADENYLYLTRANSFERASE"/>
    <property type="match status" value="1"/>
</dbReference>
<dbReference type="Pfam" id="PF01467">
    <property type="entry name" value="CTP_transf_like"/>
    <property type="match status" value="1"/>
</dbReference>
<dbReference type="SUPFAM" id="SSF52374">
    <property type="entry name" value="Nucleotidylyl transferase"/>
    <property type="match status" value="1"/>
</dbReference>